<sequence>MRCPFCEYNGTRVLDSRPFNHNKSIRRRRECEACERRFTTFEMVEETPLLIVKKDGTREEFSRDKILRGLVRACEKRPVPLEVLENVVNDIEKELRSCGQAEIPSNDVGEKVMERLYHVDEVAYVRFASVYRQFKDINVFMKELEELLAQARNSSFPKE</sequence>
<dbReference type="EMBL" id="AP008955">
    <property type="protein sequence ID" value="BAH42388.1"/>
    <property type="molecule type" value="Genomic_DNA"/>
</dbReference>
<dbReference type="RefSeq" id="WP_012685137.1">
    <property type="nucleotide sequence ID" value="NC_012491.1"/>
</dbReference>
<dbReference type="SMR" id="C0Z7Z5"/>
<dbReference type="STRING" id="358681.BBR47_14110"/>
<dbReference type="GeneID" id="61034668"/>
<dbReference type="KEGG" id="bbe:BBR47_14110"/>
<dbReference type="eggNOG" id="COG1327">
    <property type="taxonomic scope" value="Bacteria"/>
</dbReference>
<dbReference type="HOGENOM" id="CLU_108412_0_0_9"/>
<dbReference type="Proteomes" id="UP000001877">
    <property type="component" value="Chromosome"/>
</dbReference>
<dbReference type="GO" id="GO:0005524">
    <property type="term" value="F:ATP binding"/>
    <property type="evidence" value="ECO:0007669"/>
    <property type="project" value="UniProtKB-KW"/>
</dbReference>
<dbReference type="GO" id="GO:0003677">
    <property type="term" value="F:DNA binding"/>
    <property type="evidence" value="ECO:0007669"/>
    <property type="project" value="UniProtKB-KW"/>
</dbReference>
<dbReference type="GO" id="GO:0008270">
    <property type="term" value="F:zinc ion binding"/>
    <property type="evidence" value="ECO:0007669"/>
    <property type="project" value="UniProtKB-UniRule"/>
</dbReference>
<dbReference type="GO" id="GO:0045892">
    <property type="term" value="P:negative regulation of DNA-templated transcription"/>
    <property type="evidence" value="ECO:0007669"/>
    <property type="project" value="UniProtKB-UniRule"/>
</dbReference>
<dbReference type="HAMAP" id="MF_00440">
    <property type="entry name" value="NrdR"/>
    <property type="match status" value="1"/>
</dbReference>
<dbReference type="InterPro" id="IPR005144">
    <property type="entry name" value="ATP-cone_dom"/>
</dbReference>
<dbReference type="InterPro" id="IPR055173">
    <property type="entry name" value="NrdR-like_N"/>
</dbReference>
<dbReference type="InterPro" id="IPR003796">
    <property type="entry name" value="RNR_NrdR-like"/>
</dbReference>
<dbReference type="NCBIfam" id="TIGR00244">
    <property type="entry name" value="transcriptional regulator NrdR"/>
    <property type="match status" value="1"/>
</dbReference>
<dbReference type="PANTHER" id="PTHR30455">
    <property type="entry name" value="TRANSCRIPTIONAL REPRESSOR NRDR"/>
    <property type="match status" value="1"/>
</dbReference>
<dbReference type="PANTHER" id="PTHR30455:SF2">
    <property type="entry name" value="TRANSCRIPTIONAL REPRESSOR NRDR"/>
    <property type="match status" value="1"/>
</dbReference>
<dbReference type="Pfam" id="PF03477">
    <property type="entry name" value="ATP-cone"/>
    <property type="match status" value="1"/>
</dbReference>
<dbReference type="Pfam" id="PF22811">
    <property type="entry name" value="Zn_ribbon_NrdR"/>
    <property type="match status" value="1"/>
</dbReference>
<dbReference type="PROSITE" id="PS51161">
    <property type="entry name" value="ATP_CONE"/>
    <property type="match status" value="1"/>
</dbReference>
<comment type="function">
    <text evidence="1">Negatively regulates transcription of bacterial ribonucleotide reductase nrd genes and operons by binding to NrdR-boxes.</text>
</comment>
<comment type="cofactor">
    <cofactor evidence="1">
        <name>Zn(2+)</name>
        <dbReference type="ChEBI" id="CHEBI:29105"/>
    </cofactor>
    <text evidence="1">Binds 1 zinc ion.</text>
</comment>
<comment type="similarity">
    <text evidence="1">Belongs to the NrdR family.</text>
</comment>
<proteinExistence type="inferred from homology"/>
<reference key="1">
    <citation type="submission" date="2005-03" db="EMBL/GenBank/DDBJ databases">
        <title>Brevibacillus brevis strain 47, complete genome.</title>
        <authorList>
            <person name="Hosoyama A."/>
            <person name="Yamada R."/>
            <person name="Hongo Y."/>
            <person name="Terui Y."/>
            <person name="Ankai A."/>
            <person name="Masuyama W."/>
            <person name="Sekiguchi M."/>
            <person name="Takeda T."/>
            <person name="Asano K."/>
            <person name="Ohji S."/>
            <person name="Ichikawa N."/>
            <person name="Narita S."/>
            <person name="Aoki N."/>
            <person name="Miura H."/>
            <person name="Matsushita S."/>
            <person name="Sekigawa T."/>
            <person name="Yamagata H."/>
            <person name="Yoshikawa H."/>
            <person name="Udaka S."/>
            <person name="Tanikawa S."/>
            <person name="Fujita N."/>
        </authorList>
    </citation>
    <scope>NUCLEOTIDE SEQUENCE [LARGE SCALE GENOMIC DNA]</scope>
    <source>
        <strain>47 / JCM 6285 / NBRC 100599</strain>
    </source>
</reference>
<feature type="chain" id="PRO_1000191782" description="Transcriptional repressor NrdR">
    <location>
        <begin position="1"/>
        <end position="159"/>
    </location>
</feature>
<feature type="domain" description="ATP-cone" evidence="1">
    <location>
        <begin position="49"/>
        <end position="139"/>
    </location>
</feature>
<feature type="zinc finger region" evidence="1">
    <location>
        <begin position="3"/>
        <end position="34"/>
    </location>
</feature>
<accession>C0Z7Z5</accession>
<organism>
    <name type="scientific">Brevibacillus brevis (strain 47 / JCM 6285 / NBRC 100599)</name>
    <dbReference type="NCBI Taxonomy" id="358681"/>
    <lineage>
        <taxon>Bacteria</taxon>
        <taxon>Bacillati</taxon>
        <taxon>Bacillota</taxon>
        <taxon>Bacilli</taxon>
        <taxon>Bacillales</taxon>
        <taxon>Paenibacillaceae</taxon>
        <taxon>Brevibacillus</taxon>
    </lineage>
</organism>
<evidence type="ECO:0000255" key="1">
    <source>
        <dbReference type="HAMAP-Rule" id="MF_00440"/>
    </source>
</evidence>
<protein>
    <recommendedName>
        <fullName evidence="1">Transcriptional repressor NrdR</fullName>
    </recommendedName>
</protein>
<name>NRDR_BREBN</name>
<keyword id="KW-0067">ATP-binding</keyword>
<keyword id="KW-0238">DNA-binding</keyword>
<keyword id="KW-0479">Metal-binding</keyword>
<keyword id="KW-0547">Nucleotide-binding</keyword>
<keyword id="KW-1185">Reference proteome</keyword>
<keyword id="KW-0678">Repressor</keyword>
<keyword id="KW-0804">Transcription</keyword>
<keyword id="KW-0805">Transcription regulation</keyword>
<keyword id="KW-0862">Zinc</keyword>
<keyword id="KW-0863">Zinc-finger</keyword>
<gene>
    <name evidence="1" type="primary">nrdR</name>
    <name type="ordered locus">BBR47_14110</name>
</gene>